<gene>
    <name type="primary">Lipf</name>
</gene>
<reference key="1">
    <citation type="journal article" date="1985" name="Nucleic Acids Res.">
        <title>Molecular cloning and nucleotide sequence of rat lingual lipase cDNA.</title>
        <authorList>
            <person name="Docherty A.J.P."/>
            <person name="Bodmer M.W."/>
            <person name="Angal S."/>
            <person name="Verger R."/>
            <person name="Riviere C."/>
            <person name="Lowe P.A."/>
            <person name="Lyons A."/>
            <person name="Emtage J.S."/>
            <person name="Harris T.J.R."/>
        </authorList>
    </citation>
    <scope>NUCLEOTIDE SEQUENCE [MRNA]</scope>
    <scope>PROTEIN SEQUENCE OF 19-50</scope>
    <scope>FUNCTION</scope>
    <scope>CATALYTIC ACTIVITY</scope>
    <scope>TISSUE SPECIFICITY</scope>
</reference>
<organism>
    <name type="scientific">Rattus norvegicus</name>
    <name type="common">Rat</name>
    <dbReference type="NCBI Taxonomy" id="10116"/>
    <lineage>
        <taxon>Eukaryota</taxon>
        <taxon>Metazoa</taxon>
        <taxon>Chordata</taxon>
        <taxon>Craniata</taxon>
        <taxon>Vertebrata</taxon>
        <taxon>Euteleostomi</taxon>
        <taxon>Mammalia</taxon>
        <taxon>Eutheria</taxon>
        <taxon>Euarchontoglires</taxon>
        <taxon>Glires</taxon>
        <taxon>Rodentia</taxon>
        <taxon>Myomorpha</taxon>
        <taxon>Muroidea</taxon>
        <taxon>Muridae</taxon>
        <taxon>Murinae</taxon>
        <taxon>Rattus</taxon>
    </lineage>
</organism>
<keyword id="KW-0903">Direct protein sequencing</keyword>
<keyword id="KW-1015">Disulfide bond</keyword>
<keyword id="KW-0325">Glycoprotein</keyword>
<keyword id="KW-0378">Hydrolase</keyword>
<keyword id="KW-0442">Lipid degradation</keyword>
<keyword id="KW-0443">Lipid metabolism</keyword>
<keyword id="KW-1185">Reference proteome</keyword>
<keyword id="KW-0964">Secreted</keyword>
<keyword id="KW-0732">Signal</keyword>
<accession>P04634</accession>
<protein>
    <recommendedName>
        <fullName>Gastric triacylglycerol lipase</fullName>
        <shortName>GL</shortName>
        <shortName>Gastric lipase</shortName>
        <ecNumber evidence="5">3.1.1.3</ecNumber>
    </recommendedName>
    <alternativeName>
        <fullName>Lingual lipase</fullName>
    </alternativeName>
</protein>
<name>LIPF_RAT</name>
<dbReference type="EC" id="3.1.1.3" evidence="5"/>
<dbReference type="EMBL" id="X02309">
    <property type="protein sequence ID" value="CAA26179.1"/>
    <property type="molecule type" value="mRNA"/>
</dbReference>
<dbReference type="PIR" id="A23045">
    <property type="entry name" value="LIRTT"/>
</dbReference>
<dbReference type="RefSeq" id="NP_059037.1">
    <property type="nucleotide sequence ID" value="NM_017341.2"/>
</dbReference>
<dbReference type="SMR" id="P04634"/>
<dbReference type="FunCoup" id="P04634">
    <property type="interactions" value="38"/>
</dbReference>
<dbReference type="STRING" id="10116.ENSRNOP00000027969"/>
<dbReference type="ChEMBL" id="CHEMBL4802004"/>
<dbReference type="ESTHER" id="ratno-1lipg">
    <property type="family name" value="Acidic_Lipase"/>
</dbReference>
<dbReference type="GlyCosmos" id="P04634">
    <property type="glycosylation" value="4 sites, No reported glycans"/>
</dbReference>
<dbReference type="GlyGen" id="P04634">
    <property type="glycosylation" value="4 sites"/>
</dbReference>
<dbReference type="PhosphoSitePlus" id="P04634"/>
<dbReference type="PaxDb" id="10116-ENSRNOP00000027969"/>
<dbReference type="Ensembl" id="ENSRNOT00000027969.5">
    <property type="protein sequence ID" value="ENSRNOP00000027969.2"/>
    <property type="gene ID" value="ENSRNOG00000019448.5"/>
</dbReference>
<dbReference type="GeneID" id="50682"/>
<dbReference type="KEGG" id="rno:50682"/>
<dbReference type="UCSC" id="RGD:708441">
    <property type="organism name" value="rat"/>
</dbReference>
<dbReference type="AGR" id="RGD:708441"/>
<dbReference type="CTD" id="8513"/>
<dbReference type="RGD" id="708441">
    <property type="gene designation" value="Lipf"/>
</dbReference>
<dbReference type="eggNOG" id="KOG2624">
    <property type="taxonomic scope" value="Eukaryota"/>
</dbReference>
<dbReference type="GeneTree" id="ENSGT00940000161066"/>
<dbReference type="HOGENOM" id="CLU_010974_0_0_1"/>
<dbReference type="InParanoid" id="P04634"/>
<dbReference type="OMA" id="WSRRNLY"/>
<dbReference type="OrthoDB" id="9974421at2759"/>
<dbReference type="PhylomeDB" id="P04634"/>
<dbReference type="TreeFam" id="TF315485"/>
<dbReference type="Reactome" id="R-RNO-192456">
    <property type="pathway name" value="Digestion of dietary lipid"/>
</dbReference>
<dbReference type="PRO" id="PR:P04634"/>
<dbReference type="Proteomes" id="UP000002494">
    <property type="component" value="Chromosome 1"/>
</dbReference>
<dbReference type="Bgee" id="ENSRNOG00000019448">
    <property type="expression patterns" value="Expressed in stomach and 1 other cell type or tissue"/>
</dbReference>
<dbReference type="GO" id="GO:0005576">
    <property type="term" value="C:extracellular region"/>
    <property type="evidence" value="ECO:0000266"/>
    <property type="project" value="RGD"/>
</dbReference>
<dbReference type="GO" id="GO:0043231">
    <property type="term" value="C:intracellular membrane-bounded organelle"/>
    <property type="evidence" value="ECO:0000318"/>
    <property type="project" value="GO_Central"/>
</dbReference>
<dbReference type="GO" id="GO:0005739">
    <property type="term" value="C:mitochondrion"/>
    <property type="evidence" value="ECO:0000314"/>
    <property type="project" value="MGI"/>
</dbReference>
<dbReference type="GO" id="GO:0016298">
    <property type="term" value="F:lipase activity"/>
    <property type="evidence" value="ECO:0000304"/>
    <property type="project" value="RGD"/>
</dbReference>
<dbReference type="GO" id="GO:0016615">
    <property type="term" value="F:malate dehydrogenase activity"/>
    <property type="evidence" value="ECO:0000314"/>
    <property type="project" value="MGI"/>
</dbReference>
<dbReference type="GO" id="GO:0004806">
    <property type="term" value="F:triacylglycerol lipase activity"/>
    <property type="evidence" value="ECO:0000314"/>
    <property type="project" value="UniProtKB"/>
</dbReference>
<dbReference type="GO" id="GO:0016042">
    <property type="term" value="P:lipid catabolic process"/>
    <property type="evidence" value="ECO:0007669"/>
    <property type="project" value="UniProtKB-KW"/>
</dbReference>
<dbReference type="GO" id="GO:0006108">
    <property type="term" value="P:malate metabolic process"/>
    <property type="evidence" value="ECO:0000314"/>
    <property type="project" value="MGI"/>
</dbReference>
<dbReference type="FunFam" id="3.40.50.1820:FF:000012">
    <property type="entry name" value="Lipase"/>
    <property type="match status" value="1"/>
</dbReference>
<dbReference type="Gene3D" id="3.40.50.1820">
    <property type="entry name" value="alpha/beta hydrolase"/>
    <property type="match status" value="1"/>
</dbReference>
<dbReference type="InterPro" id="IPR029058">
    <property type="entry name" value="AB_hydrolase_fold"/>
</dbReference>
<dbReference type="InterPro" id="IPR006693">
    <property type="entry name" value="AB_hydrolase_lipase"/>
</dbReference>
<dbReference type="InterPro" id="IPR025483">
    <property type="entry name" value="Lipase_euk"/>
</dbReference>
<dbReference type="PANTHER" id="PTHR11005">
    <property type="entry name" value="LYSOSOMAL ACID LIPASE-RELATED"/>
    <property type="match status" value="1"/>
</dbReference>
<dbReference type="Pfam" id="PF04083">
    <property type="entry name" value="Abhydro_lipase"/>
    <property type="match status" value="1"/>
</dbReference>
<dbReference type="PIRSF" id="PIRSF000862">
    <property type="entry name" value="Steryl_ester_lip"/>
    <property type="match status" value="1"/>
</dbReference>
<dbReference type="SUPFAM" id="SSF53474">
    <property type="entry name" value="alpha/beta-Hydrolases"/>
    <property type="match status" value="1"/>
</dbReference>
<dbReference type="PROSITE" id="PS00120">
    <property type="entry name" value="LIPASE_SER"/>
    <property type="match status" value="1"/>
</dbReference>
<comment type="function">
    <text evidence="1 5">Catalyzes the hydrolysis of triacylglycerols to yield free fatty acids, diacylglycerol, monoacylglycerol, and glycerol (PubMed:3839077). Shows a preferential hydrolysis at the sn-3 position of triacylglycerol (By similarity).</text>
</comment>
<comment type="catalytic activity">
    <reaction evidence="5">
        <text>a triacylglycerol + H2O = a diacylglycerol + a fatty acid + H(+)</text>
        <dbReference type="Rhea" id="RHEA:12044"/>
        <dbReference type="ChEBI" id="CHEBI:15377"/>
        <dbReference type="ChEBI" id="CHEBI:15378"/>
        <dbReference type="ChEBI" id="CHEBI:17855"/>
        <dbReference type="ChEBI" id="CHEBI:18035"/>
        <dbReference type="ChEBI" id="CHEBI:28868"/>
        <dbReference type="EC" id="3.1.1.3"/>
    </reaction>
</comment>
<comment type="catalytic activity">
    <reaction evidence="1">
        <text>1,2,3-tri-(9Z-octadecenoyl)-glycerol + H2O = 1,2-di-(9Z-octadecenoyl)-sn-glycerol + (9Z)-octadecenoate + H(+)</text>
        <dbReference type="Rhea" id="RHEA:39931"/>
        <dbReference type="ChEBI" id="CHEBI:15377"/>
        <dbReference type="ChEBI" id="CHEBI:15378"/>
        <dbReference type="ChEBI" id="CHEBI:30823"/>
        <dbReference type="ChEBI" id="CHEBI:52333"/>
        <dbReference type="ChEBI" id="CHEBI:53753"/>
    </reaction>
    <physiologicalReaction direction="left-to-right" evidence="1">
        <dbReference type="Rhea" id="RHEA:39932"/>
    </physiologicalReaction>
</comment>
<comment type="catalytic activity">
    <reaction evidence="1">
        <text>1,2,3-trioctanoylglycerol + H2O = 1,2-dioctanoyl-sn-glycerol + octanoate + H(+)</text>
        <dbReference type="Rhea" id="RHEA:40047"/>
        <dbReference type="ChEBI" id="CHEBI:15377"/>
        <dbReference type="ChEBI" id="CHEBI:15378"/>
        <dbReference type="ChEBI" id="CHEBI:25646"/>
        <dbReference type="ChEBI" id="CHEBI:76978"/>
        <dbReference type="ChEBI" id="CHEBI:76979"/>
    </reaction>
    <physiologicalReaction direction="left-to-right" evidence="1">
        <dbReference type="Rhea" id="RHEA:40048"/>
    </physiologicalReaction>
</comment>
<comment type="subcellular location">
    <subcellularLocation>
        <location evidence="2">Secreted</location>
    </subcellularLocation>
</comment>
<comment type="tissue specificity">
    <text evidence="5">Secreted by the serous (von Ebner's) glands at the back of the rat tongue.</text>
</comment>
<comment type="similarity">
    <text evidence="6">Belongs to the AB hydrolase superfamily. Lipase family.</text>
</comment>
<feature type="signal peptide" evidence="5">
    <location>
        <begin position="1"/>
        <end position="18"/>
    </location>
</feature>
<feature type="chain" id="PRO_0000017768" description="Gastric triacylglycerol lipase">
    <location>
        <begin position="19"/>
        <end position="395"/>
    </location>
</feature>
<feature type="domain" description="AB hydrolase-1" evidence="3">
    <location>
        <begin position="77"/>
        <end position="376"/>
    </location>
</feature>
<feature type="active site" description="Nucleophile" evidence="1">
    <location>
        <position position="171"/>
    </location>
</feature>
<feature type="active site" description="Charge relay system" evidence="4">
    <location>
        <position position="342"/>
    </location>
</feature>
<feature type="active site" description="Charge relay system" evidence="4">
    <location>
        <position position="371"/>
    </location>
</feature>
<feature type="glycosylation site" description="N-linked (GlcNAc...) asparagine" evidence="3">
    <location>
        <position position="33"/>
    </location>
</feature>
<feature type="glycosylation site" description="N-linked (GlcNAc...) asparagine" evidence="3">
    <location>
        <position position="68"/>
    </location>
</feature>
<feature type="glycosylation site" description="N-linked (GlcNAc...) asparagine" evidence="3">
    <location>
        <position position="98"/>
    </location>
</feature>
<feature type="glycosylation site" description="N-linked (GlcNAc...) asparagine" evidence="3">
    <location>
        <position position="270"/>
    </location>
</feature>
<feature type="disulfide bond" evidence="1">
    <location>
        <begin position="245"/>
        <end position="254"/>
    </location>
</feature>
<sequence>MWLLLITSVISTFGGAHGLFGKLGPGNPEANMNISQMITYWGYPCQEYEVVTEDGYILGVYRIPHGKNNSENIGKRPVVYLQHGLIASATNWIANLPNNSLAFMLADAGYDVWLGNSRGNTWSRKNVYYSPDSVEFWAFSFDEMAKYDLPATINFIVQKTGQEKIHYVGHSQGTTIGFIAFSTNPTLAKKIKTFYALAPVATVKYTQSPLKKISFIPTFLFKLMFGKKMFLPHTYFDDFLGTEVCSREVLDLLCSNTLFIFCGFDKKNLNVSRFDVYLGHNPAGTSVQDFLHWAQLVRSGKFQAFNWGSPSQNMLHYNQKTPPEYDVSAMTVPVAVWNGGNDILADPQDVAMLLPKLSNLLFHKEILAYNHLDFIWAMDAPQEVYNEMISMMAED</sequence>
<evidence type="ECO:0000250" key="1">
    <source>
        <dbReference type="UniProtKB" id="P07098"/>
    </source>
</evidence>
<evidence type="ECO:0000250" key="2">
    <source>
        <dbReference type="UniProtKB" id="P80035"/>
    </source>
</evidence>
<evidence type="ECO:0000255" key="3"/>
<evidence type="ECO:0000255" key="4">
    <source>
        <dbReference type="PROSITE-ProRule" id="PRU10037"/>
    </source>
</evidence>
<evidence type="ECO:0000269" key="5">
    <source>
    </source>
</evidence>
<evidence type="ECO:0000305" key="6"/>
<proteinExistence type="evidence at protein level"/>